<feature type="peptide" id="PRO_0000015826" description="Insulin B chain" evidence="2">
    <location>
        <begin position="1"/>
        <end position="29"/>
    </location>
</feature>
<feature type="peptide" id="PRO_0000015827" description="Insulin A chain">
    <location>
        <begin position="30"/>
        <end position="50"/>
    </location>
</feature>
<feature type="disulfide bond" description="Interchain (between B and A chains)" evidence="1">
    <location>
        <begin position="7"/>
        <end position="36"/>
    </location>
</feature>
<feature type="disulfide bond" description="Interchain (between B and A chains)" evidence="1">
    <location>
        <begin position="19"/>
        <end position="49"/>
    </location>
</feature>
<feature type="disulfide bond" evidence="1">
    <location>
        <begin position="35"/>
        <end position="40"/>
    </location>
</feature>
<feature type="non-consecutive residues" evidence="3">
    <location>
        <begin position="29"/>
        <end position="30"/>
    </location>
</feature>
<proteinExistence type="evidence at protein level"/>
<keyword id="KW-0119">Carbohydrate metabolism</keyword>
<keyword id="KW-0903">Direct protein sequencing</keyword>
<keyword id="KW-1015">Disulfide bond</keyword>
<keyword id="KW-0313">Glucose metabolism</keyword>
<keyword id="KW-0372">Hormone</keyword>
<keyword id="KW-0964">Secreted</keyword>
<protein>
    <recommendedName>
        <fullName>Insulin</fullName>
    </recommendedName>
    <component>
        <recommendedName>
            <fullName>Insulin B chain</fullName>
        </recommendedName>
    </component>
    <component>
        <recommendedName>
            <fullName>Insulin A chain</fullName>
        </recommendedName>
    </component>
</protein>
<dbReference type="PIR" id="A01607">
    <property type="entry name" value="INBN2"/>
</dbReference>
<dbReference type="GO" id="GO:0005615">
    <property type="term" value="C:extracellular space"/>
    <property type="evidence" value="ECO:0007669"/>
    <property type="project" value="TreeGrafter"/>
</dbReference>
<dbReference type="GO" id="GO:0005179">
    <property type="term" value="F:hormone activity"/>
    <property type="evidence" value="ECO:0007669"/>
    <property type="project" value="UniProtKB-KW"/>
</dbReference>
<dbReference type="GO" id="GO:0006006">
    <property type="term" value="P:glucose metabolic process"/>
    <property type="evidence" value="ECO:0007669"/>
    <property type="project" value="UniProtKB-KW"/>
</dbReference>
<dbReference type="CDD" id="cd04367">
    <property type="entry name" value="IlGF_insulin_like"/>
    <property type="match status" value="1"/>
</dbReference>
<dbReference type="Gene3D" id="1.10.100.10">
    <property type="entry name" value="Insulin-like"/>
    <property type="match status" value="1"/>
</dbReference>
<dbReference type="InterPro" id="IPR004825">
    <property type="entry name" value="Insulin"/>
</dbReference>
<dbReference type="InterPro" id="IPR016179">
    <property type="entry name" value="Insulin-like"/>
</dbReference>
<dbReference type="InterPro" id="IPR036438">
    <property type="entry name" value="Insulin-like_sf"/>
</dbReference>
<dbReference type="InterPro" id="IPR022353">
    <property type="entry name" value="Insulin_CS"/>
</dbReference>
<dbReference type="InterPro" id="IPR022352">
    <property type="entry name" value="Insulin_family"/>
</dbReference>
<dbReference type="PANTHER" id="PTHR11454:SF9">
    <property type="entry name" value="INSULIN"/>
    <property type="match status" value="1"/>
</dbReference>
<dbReference type="PANTHER" id="PTHR11454">
    <property type="entry name" value="INSULIN/INSULIN GROWTH FACTOR"/>
    <property type="match status" value="1"/>
</dbReference>
<dbReference type="Pfam" id="PF00049">
    <property type="entry name" value="Insulin"/>
    <property type="match status" value="2"/>
</dbReference>
<dbReference type="PRINTS" id="PR00277">
    <property type="entry name" value="INSULIN"/>
</dbReference>
<dbReference type="PRINTS" id="PR00276">
    <property type="entry name" value="INSULINFAMLY"/>
</dbReference>
<dbReference type="SMART" id="SM00078">
    <property type="entry name" value="IlGF"/>
    <property type="match status" value="1"/>
</dbReference>
<dbReference type="SUPFAM" id="SSF56994">
    <property type="entry name" value="Insulin-like"/>
    <property type="match status" value="1"/>
</dbReference>
<dbReference type="PROSITE" id="PS00262">
    <property type="entry name" value="INSULIN"/>
    <property type="match status" value="1"/>
</dbReference>
<gene>
    <name type="primary">ins</name>
</gene>
<accession>P01340</accession>
<organism>
    <name type="scientific">Katsuwonus pelamis</name>
    <name type="common">Skipjack tuna</name>
    <name type="synonym">Scomber pelamis</name>
    <dbReference type="NCBI Taxonomy" id="8226"/>
    <lineage>
        <taxon>Eukaryota</taxon>
        <taxon>Metazoa</taxon>
        <taxon>Chordata</taxon>
        <taxon>Craniata</taxon>
        <taxon>Vertebrata</taxon>
        <taxon>Euteleostomi</taxon>
        <taxon>Actinopterygii</taxon>
        <taxon>Neopterygii</taxon>
        <taxon>Teleostei</taxon>
        <taxon>Neoteleostei</taxon>
        <taxon>Acanthomorphata</taxon>
        <taxon>Pelagiaria</taxon>
        <taxon>Scombriformes</taxon>
        <taxon>Scombridae</taxon>
        <taxon>Katsuwonus</taxon>
    </lineage>
</organism>
<name>INS_KATPE</name>
<comment type="function">
    <text>Insulin decreases blood glucose concentration. It increases cell permeability to monosaccharides, amino acids and fatty acids. It accelerates glycolysis, the pentose phosphate cycle, and glycogen synthesis in liver.</text>
</comment>
<comment type="subunit">
    <text>Heterodimer of a B chain and an A chain linked by two disulfide bonds.</text>
</comment>
<comment type="subcellular location">
    <subcellularLocation>
        <location>Secreted</location>
    </subcellularLocation>
</comment>
<comment type="similarity">
    <text evidence="3">Belongs to the insulin family.</text>
</comment>
<reference key="1">
    <citation type="journal article" date="1963" name="J. Biochem.">
        <title>Studies on insulin. V. On the structure of the glycyl chain of bonito insulin II.</title>
        <authorList>
            <person name="Kotaki A."/>
        </authorList>
    </citation>
    <scope>PROTEIN SEQUENCE OF 1-29</scope>
</reference>
<reference key="2">
    <citation type="journal article" date="1962" name="J. Biochem.">
        <title>Studies on insulin. III. On the structure of the alanyl chain of bonito insulin.</title>
        <authorList>
            <person name="Kotaki A."/>
        </authorList>
    </citation>
    <scope>PROTEIN SEQUENCE OF 30-50</scope>
</reference>
<evidence type="ECO:0000250" key="1"/>
<evidence type="ECO:0000269" key="2">
    <source>
    </source>
</evidence>
<evidence type="ECO:0000305" key="3"/>
<sequence>AANPHLCGSHLVEALYLVCGERGFFYQPKGIHZZCCHKPCBIFZLZBYCN</sequence>